<protein>
    <recommendedName>
        <fullName evidence="4 5">Terminase, large subunit</fullName>
    </recommendedName>
    <alternativeName>
        <fullName evidence="4">DNA-packaging protein</fullName>
    </alternativeName>
    <alternativeName>
        <fullName evidence="6">Gene product 85</fullName>
        <shortName evidence="5">gp85</shortName>
    </alternativeName>
    <domain>
        <recommendedName>
            <fullName evidence="4">ATPase</fullName>
            <ecNumber evidence="4">3.6.4.-</ecNumber>
        </recommendedName>
    </domain>
    <domain>
        <recommendedName>
            <fullName evidence="4">Endonuclease</fullName>
            <ecNumber evidence="1 4">3.1.21.-</ecNumber>
        </recommendedName>
    </domain>
</protein>
<sequence>MKRLRPSDKFFELLGYKPHHVQLAIHRSTAKRRVACLGRQSGKSEAASVEAVFELFARPGSQGWIIAPTYDQAEIIFGRVVEKVERLAEVFPATEVQLQRRRLRLLVHHYDRPVNAPGAKRVATSEFRGKSADRPDNLRGATLDFVILDEAAMIPFSVWSEAIEPTLSVRDGWALIISTPKGLNWFYEFFLMGWRGGLKEGIPNSGVNQTHPDFESFHAASWDVWPERREWYMERRLYIPDLEFRQEYGAEFVSHSNSVFSGLDMLILLPYERRGTRLVVEDYRPDHIYCIGADFGKNQDYSVFSVLDLDTGAIVCLERMNGATWSDQVARLKALSEDYGHAYVVADTWGVGDAIAEELDAQGINYTPLPVKSSSVKEQLISNLALLMEKGQVAVPNDKTILDELRNFRYYRTASGNQVMRAYGRGHDDIVMSLALAYSQYEGKDGYKFELAEERPSKLKHEESVMSLVEDDFTDLELANRAFSA</sequence>
<reference key="1">
    <citation type="journal article" date="2008" name="J. Mol. Biol.">
        <title>Genome comparison and proteomic characterization of Thermus thermophilus bacteriophages P23-45 and P74-26: siphoviruses with triplex-forming sequences and the longest known tails.</title>
        <authorList>
            <person name="Minakhin L."/>
            <person name="Goel M."/>
            <person name="Berdygulova Z."/>
            <person name="Ramanculov E."/>
            <person name="Florens L."/>
            <person name="Glazko G."/>
            <person name="Karamychev V.N."/>
            <person name="Slesarev A.I."/>
            <person name="Kozyavkin S.A."/>
            <person name="Khromov I."/>
            <person name="Ackermann H.W."/>
            <person name="Washburn M."/>
            <person name="Mushegian A."/>
            <person name="Severinov K."/>
        </authorList>
    </citation>
    <scope>NUCLEOTIDE SEQUENCE [GENOMIC DNA]</scope>
</reference>
<reference key="2">
    <citation type="journal article" date="2019" name="Proc. Natl. Acad. Sci. U.S.A.">
        <title>Cryo-EM structure and in vitro DNA packaging of a thermophilic virus with supersized T=7 capsids.</title>
        <authorList>
            <person name="Bayfield O.W."/>
            <person name="Klimuk E."/>
            <person name="Winkler D.C."/>
            <person name="Hesketh E.L."/>
            <person name="Chechik M."/>
            <person name="Cheng N."/>
            <person name="Dykeman E.C."/>
            <person name="Minakhin L."/>
            <person name="Ranson N.A."/>
            <person name="Severinov K."/>
            <person name="Steven A.C."/>
            <person name="Antson A.A."/>
        </authorList>
    </citation>
    <scope>FUNCTION</scope>
</reference>
<proteinExistence type="inferred from homology"/>
<accession>A7XXB7</accession>
<organismHost>
    <name type="scientific">Thermus thermophilus</name>
    <dbReference type="NCBI Taxonomy" id="274"/>
</organismHost>
<name>TERL_BP234</name>
<dbReference type="EC" id="3.6.4.-" evidence="4"/>
<dbReference type="EC" id="3.1.21.-" evidence="1 4"/>
<dbReference type="EMBL" id="EU100883">
    <property type="protein sequence ID" value="ABU96918.1"/>
    <property type="molecule type" value="Genomic_DNA"/>
</dbReference>
<dbReference type="RefSeq" id="YP_001467938.1">
    <property type="nucleotide sequence ID" value="NC_009803.1"/>
</dbReference>
<dbReference type="SMR" id="A7XXB7"/>
<dbReference type="GeneID" id="5600506"/>
<dbReference type="KEGG" id="vg:5600506"/>
<dbReference type="Proteomes" id="UP000001132">
    <property type="component" value="Genome"/>
</dbReference>
<dbReference type="GO" id="GO:0098009">
    <property type="term" value="C:viral terminase, large subunit"/>
    <property type="evidence" value="ECO:0007669"/>
    <property type="project" value="UniProtKB-UniRule"/>
</dbReference>
<dbReference type="GO" id="GO:0005524">
    <property type="term" value="F:ATP binding"/>
    <property type="evidence" value="ECO:0007669"/>
    <property type="project" value="UniProtKB-KW"/>
</dbReference>
<dbReference type="GO" id="GO:0016887">
    <property type="term" value="F:ATP hydrolysis activity"/>
    <property type="evidence" value="ECO:0007669"/>
    <property type="project" value="InterPro"/>
</dbReference>
<dbReference type="GO" id="GO:0004519">
    <property type="term" value="F:endonuclease activity"/>
    <property type="evidence" value="ECO:0007669"/>
    <property type="project" value="UniProtKB-UniRule"/>
</dbReference>
<dbReference type="GO" id="GO:0046872">
    <property type="term" value="F:metal ion binding"/>
    <property type="evidence" value="ECO:0007669"/>
    <property type="project" value="UniProtKB-UniRule"/>
</dbReference>
<dbReference type="GO" id="GO:0051276">
    <property type="term" value="P:chromosome organization"/>
    <property type="evidence" value="ECO:0007669"/>
    <property type="project" value="UniProtKB-UniRule"/>
</dbReference>
<dbReference type="GO" id="GO:0019073">
    <property type="term" value="P:viral DNA genome packaging"/>
    <property type="evidence" value="ECO:0007669"/>
    <property type="project" value="UniProtKB-UniRule"/>
</dbReference>
<dbReference type="Gene3D" id="3.30.420.240">
    <property type="match status" value="1"/>
</dbReference>
<dbReference type="Gene3D" id="3.40.50.300">
    <property type="entry name" value="P-loop containing nucleotide triphosphate hydrolases"/>
    <property type="match status" value="1"/>
</dbReference>
<dbReference type="HAMAP" id="MF_04146">
    <property type="entry name" value="TERL_T4"/>
    <property type="match status" value="1"/>
</dbReference>
<dbReference type="InterPro" id="IPR027417">
    <property type="entry name" value="P-loop_NTPase"/>
</dbReference>
<dbReference type="InterPro" id="IPR035421">
    <property type="entry name" value="Terminase_6C"/>
</dbReference>
<dbReference type="InterPro" id="IPR044267">
    <property type="entry name" value="Terminase_large_su_gp17-like"/>
</dbReference>
<dbReference type="Pfam" id="PF17289">
    <property type="entry name" value="Terminase_6C"/>
    <property type="match status" value="1"/>
</dbReference>
<dbReference type="Pfam" id="PF03237">
    <property type="entry name" value="Terminase_6N"/>
    <property type="match status" value="1"/>
</dbReference>
<evidence type="ECO:0000250" key="1">
    <source>
        <dbReference type="UniProtKB" id="A0A1L4BKS3"/>
    </source>
</evidence>
<evidence type="ECO:0000250" key="2">
    <source>
        <dbReference type="UniProtKB" id="A7XXR1"/>
    </source>
</evidence>
<evidence type="ECO:0000250" key="3">
    <source>
        <dbReference type="UniProtKB" id="P17312"/>
    </source>
</evidence>
<evidence type="ECO:0000255" key="4">
    <source>
        <dbReference type="HAMAP-Rule" id="MF_04146"/>
    </source>
</evidence>
<evidence type="ECO:0000303" key="5">
    <source>
    </source>
</evidence>
<evidence type="ECO:0000305" key="6"/>
<evidence type="ECO:0000305" key="7">
    <source>
    </source>
</evidence>
<evidence type="ECO:0000312" key="8">
    <source>
        <dbReference type="EMBL" id="ABU96918.1"/>
    </source>
</evidence>
<keyword id="KW-0067">ATP-binding</keyword>
<keyword id="KW-0255">Endonuclease</keyword>
<keyword id="KW-0378">Hydrolase</keyword>
<keyword id="KW-0460">Magnesium</keyword>
<keyword id="KW-0479">Metal-binding</keyword>
<keyword id="KW-0540">Nuclease</keyword>
<keyword id="KW-0547">Nucleotide-binding</keyword>
<keyword id="KW-1185">Reference proteome</keyword>
<keyword id="KW-0231">Viral genome packaging</keyword>
<keyword id="KW-1188">Viral release from host cell</keyword>
<comment type="function">
    <text evidence="4 7">The terminase large subunit acts as an ATP driven molecular motor necessary for viral DNA translocation into empty capsids and as an endonuclease that cuts the viral genome to initiate and to end a packaging reaction The terminase lies at a unique vertex of the procapsid and is composed of two subunits, a small terminase subunit involved in viral DNA recognition (packaging sequence), and a large terminase subunit possessing endonucleolytic and ATPase activities. Both terminase subunits heterooligomerize and are docked on the portal protein to form the packaging machine. The terminase large subunit exhibits endonuclease activity and cleaves the viral genome concatemer. Once the capsid is packaged with the DNA, the terminase complex is substituted by the tail.</text>
</comment>
<comment type="cofactor">
    <cofactor evidence="1">
        <name>Mg(2+)</name>
        <dbReference type="ChEBI" id="CHEBI:18420"/>
    </cofactor>
    <text evidence="1">Nuclease activity requires 2 Mg(2+) ions per subunit (By similarity). Also active in the presence of Mn(2+) or Co(2+) (By similarity).</text>
</comment>
<comment type="subunit">
    <text evidence="2 4">Interacts with the terminase small subunit; the active complex is composed of a pentamer of terminase large subunits and a dodecamer of terminase small subunits (By similarity). Interacts with the portal protein (By similarity).</text>
</comment>
<comment type="domain">
    <text evidence="4">The N-terminus contains an ATPase domain. The C-terminus contains an endonuclease domain.</text>
</comment>
<comment type="similarity">
    <text evidence="4">Belongs to the Tequatrovirus large terminase family.</text>
</comment>
<organism>
    <name type="scientific">Thermus virus P23-45</name>
    <name type="common">Thermus thermophilus phage P23-45</name>
    <dbReference type="NCBI Taxonomy" id="2914006"/>
    <lineage>
        <taxon>Viruses</taxon>
        <taxon>Duplodnaviria</taxon>
        <taxon>Heunggongvirae</taxon>
        <taxon>Uroviricota</taxon>
        <taxon>Caudoviricetes</taxon>
        <taxon>Oshimavirus</taxon>
        <taxon>Oshimavirus P2345</taxon>
    </lineage>
</organism>
<feature type="chain" id="PRO_0000447194" description="Terminase, large subunit">
    <location>
        <begin position="1"/>
        <end position="485"/>
    </location>
</feature>
<feature type="region of interest" description="ATPase activity" evidence="3">
    <location>
        <begin position="22"/>
        <end position="197"/>
    </location>
</feature>
<feature type="region of interest" description="Nuclease" evidence="3">
    <location>
        <begin position="256"/>
        <end position="438"/>
    </location>
</feature>
<feature type="short sequence motif" description="Walker A motif" evidence="3">
    <location>
        <begin position="125"/>
        <end position="131"/>
    </location>
</feature>
<feature type="short sequence motif" description="Walker B motif" evidence="4">
    <location>
        <begin position="145"/>
        <end position="150"/>
    </location>
</feature>
<feature type="active site" description="For ATPase activity" evidence="4">
    <location>
        <position position="150"/>
    </location>
</feature>
<feature type="binding site" evidence="2">
    <location>
        <begin position="17"/>
        <end position="22"/>
    </location>
    <ligand>
        <name>ADP</name>
        <dbReference type="ChEBI" id="CHEBI:456216"/>
    </ligand>
</feature>
<feature type="binding site" evidence="2">
    <location>
        <begin position="40"/>
        <end position="45"/>
    </location>
    <ligand>
        <name>ADP</name>
        <dbReference type="ChEBI" id="CHEBI:456216"/>
    </ligand>
</feature>
<feature type="binding site" evidence="2">
    <location>
        <position position="79"/>
    </location>
    <ligand>
        <name>ADP</name>
        <dbReference type="ChEBI" id="CHEBI:456216"/>
    </ligand>
</feature>
<feature type="binding site" evidence="3">
    <location>
        <position position="97"/>
    </location>
    <ligand>
        <name>ATP</name>
        <dbReference type="ChEBI" id="CHEBI:30616"/>
    </ligand>
</feature>
<feature type="binding site" evidence="3">
    <location>
        <position position="99"/>
    </location>
    <ligand>
        <name>ATP</name>
        <dbReference type="ChEBI" id="CHEBI:30616"/>
    </ligand>
</feature>
<feature type="binding site" evidence="3">
    <location>
        <position position="294"/>
    </location>
    <ligand>
        <name>Mg(2+)</name>
        <dbReference type="ChEBI" id="CHEBI:18420"/>
        <label>1</label>
        <note>catalytic; for nuclease activity</note>
    </ligand>
</feature>
<feature type="binding site" evidence="3">
    <location>
        <position position="294"/>
    </location>
    <ligand>
        <name>Mg(2+)</name>
        <dbReference type="ChEBI" id="CHEBI:18420"/>
        <label>2</label>
        <note>catalytic; for nuclease activity</note>
    </ligand>
</feature>
<feature type="binding site" evidence="3">
    <location>
        <position position="347"/>
    </location>
    <ligand>
        <name>Mg(2+)</name>
        <dbReference type="ChEBI" id="CHEBI:18420"/>
        <label>2</label>
        <note>catalytic; for nuclease activity</note>
    </ligand>
</feature>
<feature type="binding site" evidence="3">
    <location>
        <position position="429"/>
    </location>
    <ligand>
        <name>Mg(2+)</name>
        <dbReference type="ChEBI" id="CHEBI:18420"/>
        <label>1</label>
        <note>catalytic; for nuclease activity</note>
    </ligand>
</feature>
<feature type="site" description="Modulates nuclease activity" evidence="4">
    <location>
        <position position="300"/>
    </location>
</feature>
<gene>
    <name evidence="8" type="ORF">P23p85</name>
</gene>